<dbReference type="EMBL" id="AF456482">
    <property type="protein sequence ID" value="AAL76933.1"/>
    <property type="molecule type" value="mRNA"/>
</dbReference>
<dbReference type="SMR" id="Q8SAE6"/>
<dbReference type="Allergome" id="3245">
    <property type="allergen name" value="Dau c 4.0101"/>
</dbReference>
<dbReference type="Allergome" id="692">
    <property type="allergen name" value="Dau c 4"/>
</dbReference>
<dbReference type="GO" id="GO:0005938">
    <property type="term" value="C:cell cortex"/>
    <property type="evidence" value="ECO:0007669"/>
    <property type="project" value="TreeGrafter"/>
</dbReference>
<dbReference type="GO" id="GO:0005856">
    <property type="term" value="C:cytoskeleton"/>
    <property type="evidence" value="ECO:0007669"/>
    <property type="project" value="UniProtKB-SubCell"/>
</dbReference>
<dbReference type="GO" id="GO:0003785">
    <property type="term" value="F:actin monomer binding"/>
    <property type="evidence" value="ECO:0007669"/>
    <property type="project" value="TreeGrafter"/>
</dbReference>
<dbReference type="CDD" id="cd00148">
    <property type="entry name" value="PROF"/>
    <property type="match status" value="1"/>
</dbReference>
<dbReference type="FunFam" id="3.30.450.30:FF:000001">
    <property type="entry name" value="Profilin"/>
    <property type="match status" value="1"/>
</dbReference>
<dbReference type="Gene3D" id="3.30.450.30">
    <property type="entry name" value="Dynein light chain 2a, cytoplasmic"/>
    <property type="match status" value="1"/>
</dbReference>
<dbReference type="InterPro" id="IPR048278">
    <property type="entry name" value="PFN"/>
</dbReference>
<dbReference type="InterPro" id="IPR005455">
    <property type="entry name" value="PFN_euk"/>
</dbReference>
<dbReference type="InterPro" id="IPR036140">
    <property type="entry name" value="PFN_sf"/>
</dbReference>
<dbReference type="InterPro" id="IPR027310">
    <property type="entry name" value="Profilin_CS"/>
</dbReference>
<dbReference type="PANTHER" id="PTHR11604">
    <property type="entry name" value="PROFILIN"/>
    <property type="match status" value="1"/>
</dbReference>
<dbReference type="PANTHER" id="PTHR11604:SF25">
    <property type="entry name" value="PROFILIN-5"/>
    <property type="match status" value="1"/>
</dbReference>
<dbReference type="Pfam" id="PF00235">
    <property type="entry name" value="Profilin"/>
    <property type="match status" value="1"/>
</dbReference>
<dbReference type="PRINTS" id="PR00392">
    <property type="entry name" value="PROFILIN"/>
</dbReference>
<dbReference type="PRINTS" id="PR01640">
    <property type="entry name" value="PROFILINPLNT"/>
</dbReference>
<dbReference type="SMART" id="SM00392">
    <property type="entry name" value="PROF"/>
    <property type="match status" value="1"/>
</dbReference>
<dbReference type="SUPFAM" id="SSF55770">
    <property type="entry name" value="Profilin (actin-binding protein)"/>
    <property type="match status" value="1"/>
</dbReference>
<dbReference type="PROSITE" id="PS00414">
    <property type="entry name" value="PROFILIN"/>
    <property type="match status" value="1"/>
</dbReference>
<reference key="1">
    <citation type="submission" date="2001-12" db="EMBL/GenBank/DDBJ databases">
        <title>Molecular characterization of Dau c 4 (profilin), a minor allergen from carrot.</title>
        <authorList>
            <person name="Vieths S."/>
            <person name="Wangorsch A."/>
            <person name="Ballmer-Weber B.K."/>
        </authorList>
    </citation>
    <scope>NUCLEOTIDE SEQUENCE [MRNA]</scope>
</reference>
<comment type="function">
    <text evidence="1">Binds to actin and affects the structure of the cytoskeleton. At high concentrations, profilin prevents the polymerization of actin, whereas it enhances it at low concentrations. By binding to PIP2, it inhibits the formation of IP3 and DG (By similarity).</text>
</comment>
<comment type="subunit">
    <text>Occurs in many kinds of cells as a complex with monomeric actin in a 1:1 ratio.</text>
</comment>
<comment type="subcellular location">
    <subcellularLocation>
        <location evidence="1">Cytoplasm</location>
        <location evidence="1">Cytoskeleton</location>
    </subcellularLocation>
</comment>
<comment type="allergen">
    <text>Causes an allergic reaction in human.</text>
</comment>
<comment type="similarity">
    <text evidence="2">Belongs to the profilin family.</text>
</comment>
<accession>Q8SAE6</accession>
<keyword id="KW-0009">Actin-binding</keyword>
<keyword id="KW-0020">Allergen</keyword>
<keyword id="KW-0963">Cytoplasm</keyword>
<keyword id="KW-0206">Cytoskeleton</keyword>
<sequence>MSWQTYVDDHLMCEVDGNPGQQLSAAAIIGHDGSVWAQSSTFPKFKPEEITGIMKNFDEPGHLAPTGLYLGGTKYMVIQGEPIAVIRGKKGSGGVTIKKTGQALVFGVYDEPVTPGQCNLIVERLGDYLIEQGL</sequence>
<protein>
    <recommendedName>
        <fullName>Profilin</fullName>
    </recommendedName>
    <alternativeName>
        <fullName>Minor pollen allergen Dau c 4</fullName>
    </alternativeName>
    <allergenName>Dau c 4</allergenName>
</protein>
<feature type="initiator methionine" description="Removed" evidence="1">
    <location>
        <position position="1"/>
    </location>
</feature>
<feature type="chain" id="PRO_0000199630" description="Profilin">
    <location>
        <begin position="2"/>
        <end position="134"/>
    </location>
</feature>
<name>PROF_DAUCA</name>
<proteinExistence type="evidence at protein level"/>
<evidence type="ECO:0000250" key="1"/>
<evidence type="ECO:0000305" key="2"/>
<organism>
    <name type="scientific">Daucus carota</name>
    <name type="common">Wild carrot</name>
    <dbReference type="NCBI Taxonomy" id="4039"/>
    <lineage>
        <taxon>Eukaryota</taxon>
        <taxon>Viridiplantae</taxon>
        <taxon>Streptophyta</taxon>
        <taxon>Embryophyta</taxon>
        <taxon>Tracheophyta</taxon>
        <taxon>Spermatophyta</taxon>
        <taxon>Magnoliopsida</taxon>
        <taxon>eudicotyledons</taxon>
        <taxon>Gunneridae</taxon>
        <taxon>Pentapetalae</taxon>
        <taxon>asterids</taxon>
        <taxon>campanulids</taxon>
        <taxon>Apiales</taxon>
        <taxon>Apiaceae</taxon>
        <taxon>Apioideae</taxon>
        <taxon>Scandiceae</taxon>
        <taxon>Daucinae</taxon>
        <taxon>Daucus</taxon>
        <taxon>Daucus sect. Daucus</taxon>
    </lineage>
</organism>